<feature type="chain" id="PRO_0000251658" description="Large ribosomal subunit protein uL16">
    <location>
        <begin position="1"/>
        <end position="137"/>
    </location>
</feature>
<proteinExistence type="inferred from homology"/>
<protein>
    <recommendedName>
        <fullName evidence="1">Large ribosomal subunit protein uL16</fullName>
    </recommendedName>
    <alternativeName>
        <fullName evidence="2">50S ribosomal protein L16</fullName>
    </alternativeName>
</protein>
<accession>Q2K9K9</accession>
<organism>
    <name type="scientific">Rhizobium etli (strain ATCC 51251 / DSM 11541 / JCM 21823 / NBRC 15573 / CFN 42)</name>
    <dbReference type="NCBI Taxonomy" id="347834"/>
    <lineage>
        <taxon>Bacteria</taxon>
        <taxon>Pseudomonadati</taxon>
        <taxon>Pseudomonadota</taxon>
        <taxon>Alphaproteobacteria</taxon>
        <taxon>Hyphomicrobiales</taxon>
        <taxon>Rhizobiaceae</taxon>
        <taxon>Rhizobium/Agrobacterium group</taxon>
        <taxon>Rhizobium</taxon>
    </lineage>
</organism>
<sequence length="137" mass="15527">MLQPKRTKYRKQFKGRIKGVAKGGSDLAFGEFGLKAQEPNRVNAREIEAARRAITRYMKRAGRVWIRVFPDVPVTAKPTEVRMGKGKGSVEYWACKVKPGRMMFEIDGVSEEIAREALRLGSAKLSVKTRFVQRIAE</sequence>
<comment type="function">
    <text evidence="1">Binds 23S rRNA and is also seen to make contacts with the A and possibly P site tRNAs.</text>
</comment>
<comment type="subunit">
    <text evidence="1">Part of the 50S ribosomal subunit.</text>
</comment>
<comment type="similarity">
    <text evidence="1">Belongs to the universal ribosomal protein uL16 family.</text>
</comment>
<name>RL16_RHIEC</name>
<dbReference type="EMBL" id="CP000133">
    <property type="protein sequence ID" value="ABC90477.1"/>
    <property type="molecule type" value="Genomic_DNA"/>
</dbReference>
<dbReference type="RefSeq" id="WP_003573792.1">
    <property type="nucleotide sequence ID" value="NC_007761.1"/>
</dbReference>
<dbReference type="SMR" id="Q2K9K9"/>
<dbReference type="GeneID" id="91148135"/>
<dbReference type="KEGG" id="ret:RHE_CH01682"/>
<dbReference type="eggNOG" id="COG0197">
    <property type="taxonomic scope" value="Bacteria"/>
</dbReference>
<dbReference type="HOGENOM" id="CLU_078858_2_1_5"/>
<dbReference type="OrthoDB" id="9802589at2"/>
<dbReference type="Proteomes" id="UP000001936">
    <property type="component" value="Chromosome"/>
</dbReference>
<dbReference type="GO" id="GO:0022625">
    <property type="term" value="C:cytosolic large ribosomal subunit"/>
    <property type="evidence" value="ECO:0007669"/>
    <property type="project" value="TreeGrafter"/>
</dbReference>
<dbReference type="GO" id="GO:0019843">
    <property type="term" value="F:rRNA binding"/>
    <property type="evidence" value="ECO:0007669"/>
    <property type="project" value="UniProtKB-UniRule"/>
</dbReference>
<dbReference type="GO" id="GO:0003735">
    <property type="term" value="F:structural constituent of ribosome"/>
    <property type="evidence" value="ECO:0007669"/>
    <property type="project" value="InterPro"/>
</dbReference>
<dbReference type="GO" id="GO:0000049">
    <property type="term" value="F:tRNA binding"/>
    <property type="evidence" value="ECO:0007669"/>
    <property type="project" value="UniProtKB-KW"/>
</dbReference>
<dbReference type="GO" id="GO:0006412">
    <property type="term" value="P:translation"/>
    <property type="evidence" value="ECO:0007669"/>
    <property type="project" value="UniProtKB-UniRule"/>
</dbReference>
<dbReference type="CDD" id="cd01433">
    <property type="entry name" value="Ribosomal_L16_L10e"/>
    <property type="match status" value="1"/>
</dbReference>
<dbReference type="FunFam" id="3.90.1170.10:FF:000001">
    <property type="entry name" value="50S ribosomal protein L16"/>
    <property type="match status" value="1"/>
</dbReference>
<dbReference type="Gene3D" id="3.90.1170.10">
    <property type="entry name" value="Ribosomal protein L10e/L16"/>
    <property type="match status" value="1"/>
</dbReference>
<dbReference type="HAMAP" id="MF_01342">
    <property type="entry name" value="Ribosomal_uL16"/>
    <property type="match status" value="1"/>
</dbReference>
<dbReference type="InterPro" id="IPR047873">
    <property type="entry name" value="Ribosomal_uL16"/>
</dbReference>
<dbReference type="InterPro" id="IPR000114">
    <property type="entry name" value="Ribosomal_uL16_bact-type"/>
</dbReference>
<dbReference type="InterPro" id="IPR020798">
    <property type="entry name" value="Ribosomal_uL16_CS"/>
</dbReference>
<dbReference type="InterPro" id="IPR016180">
    <property type="entry name" value="Ribosomal_uL16_dom"/>
</dbReference>
<dbReference type="InterPro" id="IPR036920">
    <property type="entry name" value="Ribosomal_uL16_sf"/>
</dbReference>
<dbReference type="NCBIfam" id="TIGR01164">
    <property type="entry name" value="rplP_bact"/>
    <property type="match status" value="1"/>
</dbReference>
<dbReference type="PANTHER" id="PTHR12220">
    <property type="entry name" value="50S/60S RIBOSOMAL PROTEIN L16"/>
    <property type="match status" value="1"/>
</dbReference>
<dbReference type="PANTHER" id="PTHR12220:SF13">
    <property type="entry name" value="LARGE RIBOSOMAL SUBUNIT PROTEIN UL16M"/>
    <property type="match status" value="1"/>
</dbReference>
<dbReference type="Pfam" id="PF00252">
    <property type="entry name" value="Ribosomal_L16"/>
    <property type="match status" value="1"/>
</dbReference>
<dbReference type="PRINTS" id="PR00060">
    <property type="entry name" value="RIBOSOMALL16"/>
</dbReference>
<dbReference type="SUPFAM" id="SSF54686">
    <property type="entry name" value="Ribosomal protein L16p/L10e"/>
    <property type="match status" value="1"/>
</dbReference>
<dbReference type="PROSITE" id="PS00586">
    <property type="entry name" value="RIBOSOMAL_L16_1"/>
    <property type="match status" value="1"/>
</dbReference>
<dbReference type="PROSITE" id="PS00701">
    <property type="entry name" value="RIBOSOMAL_L16_2"/>
    <property type="match status" value="1"/>
</dbReference>
<evidence type="ECO:0000255" key="1">
    <source>
        <dbReference type="HAMAP-Rule" id="MF_01342"/>
    </source>
</evidence>
<evidence type="ECO:0000305" key="2"/>
<reference key="1">
    <citation type="journal article" date="2006" name="Proc. Natl. Acad. Sci. U.S.A.">
        <title>The partitioned Rhizobium etli genome: genetic and metabolic redundancy in seven interacting replicons.</title>
        <authorList>
            <person name="Gonzalez V."/>
            <person name="Santamaria R.I."/>
            <person name="Bustos P."/>
            <person name="Hernandez-Gonzalez I."/>
            <person name="Medrano-Soto A."/>
            <person name="Moreno-Hagelsieb G."/>
            <person name="Janga S.C."/>
            <person name="Ramirez M.A."/>
            <person name="Jimenez-Jacinto V."/>
            <person name="Collado-Vides J."/>
            <person name="Davila G."/>
        </authorList>
    </citation>
    <scope>NUCLEOTIDE SEQUENCE [LARGE SCALE GENOMIC DNA]</scope>
    <source>
        <strain>ATCC 51251 / DSM 11541 / JCM 21823 / NBRC 15573 / CFN 42</strain>
    </source>
</reference>
<gene>
    <name evidence="1" type="primary">rplP</name>
    <name type="ordered locus">RHE_CH01682</name>
</gene>
<keyword id="KW-1185">Reference proteome</keyword>
<keyword id="KW-0687">Ribonucleoprotein</keyword>
<keyword id="KW-0689">Ribosomal protein</keyword>
<keyword id="KW-0694">RNA-binding</keyword>
<keyword id="KW-0699">rRNA-binding</keyword>
<keyword id="KW-0820">tRNA-binding</keyword>